<protein>
    <recommendedName>
        <fullName>Creatine kinase M-type</fullName>
        <ecNumber evidence="1">2.7.3.2</ecNumber>
    </recommendedName>
    <alternativeName>
        <fullName>Creatine kinase M chain</fullName>
    </alternativeName>
    <alternativeName>
        <fullName>Creatine phosphokinase M-type</fullName>
        <shortName>CPK-M</shortName>
    </alternativeName>
    <alternativeName>
        <fullName>M-CK</fullName>
    </alternativeName>
</protein>
<reference key="1">
    <citation type="journal article" date="1984" name="J. Biol. Chem.">
        <title>Isolation and sequence analysis of cDNA clones coding for rat skeletal muscle creatine kinase.</title>
        <authorList>
            <person name="Benfield P.A."/>
            <person name="Zivin R.A."/>
            <person name="Miller L.S."/>
            <person name="Sowder R."/>
            <person name="Smythers G.W."/>
            <person name="Henderson L."/>
            <person name="Oroszlan S."/>
            <person name="Pearson M.L."/>
        </authorList>
    </citation>
    <scope>NUCLEOTIDE SEQUENCE [MRNA]</scope>
    <scope>PARTIAL PROTEIN SEQUENCE</scope>
    <source>
        <strain>Fischer 344</strain>
    </source>
</reference>
<reference key="2">
    <citation type="journal article" date="2004" name="Genome Res.">
        <title>The status, quality, and expansion of the NIH full-length cDNA project: the Mammalian Gene Collection (MGC).</title>
        <authorList>
            <consortium name="The MGC Project Team"/>
        </authorList>
    </citation>
    <scope>NUCLEOTIDE SEQUENCE [LARGE SCALE MRNA]</scope>
    <source>
        <tissue>Prostate</tissue>
    </source>
</reference>
<reference key="3">
    <citation type="journal article" date="1984" name="Exp. Biol. Med.">
        <title>The nucleotide sequence of rat muscle creatine kinase cDNA and ckm transcription during myogenesis in an RNA polymerase II mutant of L6 myoblasts.</title>
        <authorList>
            <person name="Benfield P.A."/>
            <person name="Zivin R.A."/>
            <person name="Shearman C.W."/>
            <person name="Graf D."/>
            <person name="Henderson L."/>
            <person name="Oroszlan S."/>
            <person name="Pearson M.L."/>
        </authorList>
    </citation>
    <scope>NUCLEOTIDE SEQUENCE [MRNA] OF 87-381</scope>
</reference>
<reference key="4">
    <citation type="submission" date="2006-12" db="UniProtKB">
        <authorList>
            <person name="Lubec G."/>
            <person name="Afjehi-Sadat L."/>
        </authorList>
    </citation>
    <scope>PROTEIN SEQUENCE OF 87-96; 139-148; 157-170 AND 321-341</scope>
    <scope>IDENTIFICATION BY MASS SPECTROMETRY</scope>
    <source>
        <strain>Sprague-Dawley</strain>
        <tissue>Spinal cord</tissue>
    </source>
</reference>
<reference key="5">
    <citation type="journal article" date="2012" name="Nat. Commun.">
        <title>Quantitative maps of protein phosphorylation sites across 14 different rat organs and tissues.</title>
        <authorList>
            <person name="Lundby A."/>
            <person name="Secher A."/>
            <person name="Lage K."/>
            <person name="Nordsborg N.B."/>
            <person name="Dmytriyev A."/>
            <person name="Lundby C."/>
            <person name="Olsen J.V."/>
        </authorList>
    </citation>
    <scope>PHOSPHORYLATION [LARGE SCALE ANALYSIS] AT THR-166; SER-178; THR-180; SER-199; THR-313; THR-322 AND SER-372</scope>
    <scope>IDENTIFICATION BY MASS SPECTROMETRY [LARGE SCALE ANALYSIS]</scope>
</reference>
<keyword id="KW-0067">ATP-binding</keyword>
<keyword id="KW-0963">Cytoplasm</keyword>
<keyword id="KW-0903">Direct protein sequencing</keyword>
<keyword id="KW-0418">Kinase</keyword>
<keyword id="KW-0547">Nucleotide-binding</keyword>
<keyword id="KW-0597">Phosphoprotein</keyword>
<keyword id="KW-1185">Reference proteome</keyword>
<keyword id="KW-0808">Transferase</keyword>
<evidence type="ECO:0000250" key="1">
    <source>
        <dbReference type="UniProtKB" id="P00563"/>
    </source>
</evidence>
<evidence type="ECO:0000250" key="2">
    <source>
        <dbReference type="UniProtKB" id="P07310"/>
    </source>
</evidence>
<evidence type="ECO:0000250" key="3">
    <source>
        <dbReference type="UniProtKB" id="P12277"/>
    </source>
</evidence>
<evidence type="ECO:0000255" key="4">
    <source>
        <dbReference type="PROSITE-ProRule" id="PRU00842"/>
    </source>
</evidence>
<evidence type="ECO:0000255" key="5">
    <source>
        <dbReference type="PROSITE-ProRule" id="PRU00843"/>
    </source>
</evidence>
<evidence type="ECO:0000255" key="6">
    <source>
        <dbReference type="PROSITE-ProRule" id="PRU10029"/>
    </source>
</evidence>
<evidence type="ECO:0000305" key="7"/>
<evidence type="ECO:0007744" key="8">
    <source>
    </source>
</evidence>
<dbReference type="EC" id="2.7.3.2" evidence="1"/>
<dbReference type="EMBL" id="M10140">
    <property type="protein sequence ID" value="AAA40935.1"/>
    <property type="molecule type" value="mRNA"/>
</dbReference>
<dbReference type="EMBL" id="BC062058">
    <property type="protein sequence ID" value="AAH62058.1"/>
    <property type="molecule type" value="mRNA"/>
</dbReference>
<dbReference type="EMBL" id="M14864">
    <property type="protein sequence ID" value="AAA40936.1"/>
    <property type="molecule type" value="mRNA"/>
</dbReference>
<dbReference type="PIR" id="A00674">
    <property type="entry name" value="KIRTCM"/>
</dbReference>
<dbReference type="RefSeq" id="NP_036662.1">
    <property type="nucleotide sequence ID" value="NM_012530.2"/>
</dbReference>
<dbReference type="SMR" id="P00564"/>
<dbReference type="BioGRID" id="246449">
    <property type="interactions" value="3"/>
</dbReference>
<dbReference type="FunCoup" id="P00564">
    <property type="interactions" value="34"/>
</dbReference>
<dbReference type="IntAct" id="P00564">
    <property type="interactions" value="1"/>
</dbReference>
<dbReference type="MINT" id="P00564"/>
<dbReference type="STRING" id="10116.ENSRNOP00000022895"/>
<dbReference type="ChEMBL" id="CHEMBL2176800"/>
<dbReference type="GlyGen" id="P00564">
    <property type="glycosylation" value="1 site, 1 O-linked glycan (1 site)"/>
</dbReference>
<dbReference type="iPTMnet" id="P00564"/>
<dbReference type="PhosphoSitePlus" id="P00564"/>
<dbReference type="SwissPalm" id="P00564"/>
<dbReference type="PaxDb" id="10116-ENSRNOP00000022895"/>
<dbReference type="GeneID" id="24265"/>
<dbReference type="KEGG" id="rno:24265"/>
<dbReference type="UCSC" id="RGD:2358">
    <property type="organism name" value="rat"/>
</dbReference>
<dbReference type="AGR" id="RGD:2358"/>
<dbReference type="CTD" id="1158"/>
<dbReference type="RGD" id="2358">
    <property type="gene designation" value="Ckm"/>
</dbReference>
<dbReference type="eggNOG" id="KOG3581">
    <property type="taxonomic scope" value="Eukaryota"/>
</dbReference>
<dbReference type="InParanoid" id="P00564"/>
<dbReference type="OrthoDB" id="430219at2759"/>
<dbReference type="PhylomeDB" id="P00564"/>
<dbReference type="TreeFam" id="TF314214"/>
<dbReference type="Reactome" id="R-RNO-71288">
    <property type="pathway name" value="Creatine metabolism"/>
</dbReference>
<dbReference type="PRO" id="PR:P00564"/>
<dbReference type="Proteomes" id="UP000002494">
    <property type="component" value="Unplaced"/>
</dbReference>
<dbReference type="GO" id="GO:0005737">
    <property type="term" value="C:cytoplasm"/>
    <property type="evidence" value="ECO:0007669"/>
    <property type="project" value="UniProtKB-SubCell"/>
</dbReference>
<dbReference type="GO" id="GO:0005615">
    <property type="term" value="C:extracellular space"/>
    <property type="evidence" value="ECO:0000250"/>
    <property type="project" value="AgBase"/>
</dbReference>
<dbReference type="GO" id="GO:0005524">
    <property type="term" value="F:ATP binding"/>
    <property type="evidence" value="ECO:0007669"/>
    <property type="project" value="UniProtKB-KW"/>
</dbReference>
<dbReference type="GO" id="GO:0004111">
    <property type="term" value="F:creatine kinase activity"/>
    <property type="evidence" value="ECO:0000314"/>
    <property type="project" value="RGD"/>
</dbReference>
<dbReference type="GO" id="GO:0046314">
    <property type="term" value="P:phosphocreatine biosynthetic process"/>
    <property type="evidence" value="ECO:0000314"/>
    <property type="project" value="RGD"/>
</dbReference>
<dbReference type="GO" id="GO:0009408">
    <property type="term" value="P:response to heat"/>
    <property type="evidence" value="ECO:0000250"/>
    <property type="project" value="AgBase"/>
</dbReference>
<dbReference type="CDD" id="cd00716">
    <property type="entry name" value="creatine_kinase_like"/>
    <property type="match status" value="1"/>
</dbReference>
<dbReference type="FunFam" id="3.30.590.10:FF:000026">
    <property type="entry name" value="Creatine kinase B-type"/>
    <property type="match status" value="1"/>
</dbReference>
<dbReference type="FunFam" id="1.10.135.10:FF:000001">
    <property type="entry name" value="Creatine kinase M-type"/>
    <property type="match status" value="1"/>
</dbReference>
<dbReference type="Gene3D" id="1.10.135.10">
    <property type="entry name" value="ATP:guanido phosphotransferase, N-terminal domain"/>
    <property type="match status" value="1"/>
</dbReference>
<dbReference type="Gene3D" id="3.30.590.10">
    <property type="entry name" value="Glutamine synthetase/guanido kinase, catalytic domain"/>
    <property type="match status" value="1"/>
</dbReference>
<dbReference type="InterPro" id="IPR000749">
    <property type="entry name" value="ATP-guanido_PTrfase"/>
</dbReference>
<dbReference type="InterPro" id="IPR022415">
    <property type="entry name" value="ATP-guanido_PTrfase_AS"/>
</dbReference>
<dbReference type="InterPro" id="IPR022414">
    <property type="entry name" value="ATP-guanido_PTrfase_cat"/>
</dbReference>
<dbReference type="InterPro" id="IPR022413">
    <property type="entry name" value="ATP-guanido_PTrfase_N"/>
</dbReference>
<dbReference type="InterPro" id="IPR036802">
    <property type="entry name" value="ATP-guanido_PTrfase_N_sf"/>
</dbReference>
<dbReference type="InterPro" id="IPR014746">
    <property type="entry name" value="Gln_synth/guanido_kin_cat_dom"/>
</dbReference>
<dbReference type="PANTHER" id="PTHR11547">
    <property type="entry name" value="ARGININE OR CREATINE KINASE"/>
    <property type="match status" value="1"/>
</dbReference>
<dbReference type="PANTHER" id="PTHR11547:SF63">
    <property type="entry name" value="CREATINE KINASE M-TYPE"/>
    <property type="match status" value="1"/>
</dbReference>
<dbReference type="Pfam" id="PF00217">
    <property type="entry name" value="ATP-gua_Ptrans"/>
    <property type="match status" value="1"/>
</dbReference>
<dbReference type="Pfam" id="PF02807">
    <property type="entry name" value="ATP-gua_PtransN"/>
    <property type="match status" value="1"/>
</dbReference>
<dbReference type="SUPFAM" id="SSF55931">
    <property type="entry name" value="Glutamine synthetase/guanido kinase"/>
    <property type="match status" value="1"/>
</dbReference>
<dbReference type="SUPFAM" id="SSF48034">
    <property type="entry name" value="Guanido kinase N-terminal domain"/>
    <property type="match status" value="1"/>
</dbReference>
<dbReference type="PROSITE" id="PS00112">
    <property type="entry name" value="PHOSPHAGEN_KINASE"/>
    <property type="match status" value="1"/>
</dbReference>
<dbReference type="PROSITE" id="PS51510">
    <property type="entry name" value="PHOSPHAGEN_KINASE_C"/>
    <property type="match status" value="1"/>
</dbReference>
<dbReference type="PROSITE" id="PS51509">
    <property type="entry name" value="PHOSPHAGEN_KINASE_N"/>
    <property type="match status" value="1"/>
</dbReference>
<accession>P00564</accession>
<accession>Q6P6R9</accession>
<gene>
    <name type="primary">Ckm</name>
    <name type="synonym">Ckmm</name>
</gene>
<feature type="chain" id="PRO_0000211979" description="Creatine kinase M-type">
    <location>
        <begin position="1"/>
        <end position="381"/>
    </location>
</feature>
<feature type="domain" description="Phosphagen kinase N-terminal" evidence="4">
    <location>
        <begin position="11"/>
        <end position="98"/>
    </location>
</feature>
<feature type="domain" description="Phosphagen kinase C-terminal" evidence="5">
    <location>
        <begin position="125"/>
        <end position="367"/>
    </location>
</feature>
<feature type="binding site" evidence="5">
    <location>
        <begin position="128"/>
        <end position="132"/>
    </location>
    <ligand>
        <name>ATP</name>
        <dbReference type="ChEBI" id="CHEBI:30616"/>
    </ligand>
</feature>
<feature type="binding site" evidence="5">
    <location>
        <position position="191"/>
    </location>
    <ligand>
        <name>ATP</name>
        <dbReference type="ChEBI" id="CHEBI:30616"/>
    </ligand>
</feature>
<feature type="binding site" evidence="5">
    <location>
        <position position="236"/>
    </location>
    <ligand>
        <name>ATP</name>
        <dbReference type="ChEBI" id="CHEBI:30616"/>
    </ligand>
</feature>
<feature type="binding site" evidence="5">
    <location>
        <position position="292"/>
    </location>
    <ligand>
        <name>ATP</name>
        <dbReference type="ChEBI" id="CHEBI:30616"/>
    </ligand>
</feature>
<feature type="binding site" evidence="5">
    <location>
        <begin position="320"/>
        <end position="325"/>
    </location>
    <ligand>
        <name>ATP</name>
        <dbReference type="ChEBI" id="CHEBI:30616"/>
    </ligand>
</feature>
<feature type="binding site" evidence="5">
    <location>
        <position position="335"/>
    </location>
    <ligand>
        <name>ATP</name>
        <dbReference type="ChEBI" id="CHEBI:30616"/>
    </ligand>
</feature>
<feature type="modified residue" description="Phosphoserine" evidence="2">
    <location>
        <position position="164"/>
    </location>
</feature>
<feature type="modified residue" description="Phosphothreonine" evidence="8">
    <location>
        <position position="166"/>
    </location>
</feature>
<feature type="modified residue" description="Phosphoserine" evidence="8">
    <location>
        <position position="178"/>
    </location>
</feature>
<feature type="modified residue" description="Phosphothreonine" evidence="8">
    <location>
        <position position="180"/>
    </location>
</feature>
<feature type="modified residue" description="Phosphoserine" evidence="8">
    <location>
        <position position="199"/>
    </location>
</feature>
<feature type="modified residue" description="Phosphothreonine" evidence="8">
    <location>
        <position position="313"/>
    </location>
</feature>
<feature type="modified residue" description="Phosphothreonine" evidence="8">
    <location>
        <position position="322"/>
    </location>
</feature>
<feature type="modified residue" description="Phosphoserine" evidence="8">
    <location>
        <position position="372"/>
    </location>
</feature>
<feature type="sequence conflict" description="In Ref. 1; AAA40935." evidence="7" ref="1">
    <original>P</original>
    <variation>S</variation>
    <location>
        <position position="16"/>
    </location>
</feature>
<feature type="sequence conflict" description="In Ref. 3; AAA40936." evidence="7" ref="3">
    <original>D</original>
    <variation>N</variation>
    <location>
        <position position="87"/>
    </location>
</feature>
<feature type="sequence conflict" description="In Ref. 1; AAA40935 and 3; AAA40936." evidence="7" ref="1 3">
    <original>Y</original>
    <variation>F</variation>
    <location>
        <position position="100"/>
    </location>
</feature>
<proteinExistence type="evidence at protein level"/>
<sequence>MPFGNTHNKFKLNYKPQEEYPDLSKHNNHMAKVLTPDLYNKLRDKETPSGFTLDDVIQTGVDNPGHPFIMTVGCVAGDEESYTVFKDLFDPIIQDRHGGYKPTDKHKTDLNHENLKGGDDLDPNYVLSSRVRTGRSIKGYTLPPHCSRGERRAVEKLSVEALNSLTGEFKGKYYPLKSMTEQEQQQLIDDHFLFDKPVSPLLLASGMARDWPDARGIWHNDNKSFLVWVNEEDHLRVISMEKGGNMKEVFRRFCVGLQKIEEIFKKAGHPFMWNEHLGYVLTCPSNLGTGLRGGVHVKLANLSKHPKFEEILTRLRLQKRGTGGVDTAAVGAVFDISNADRLGSSEVEQVQLVVDGVKLMVEMEKKLEKGQSIDDMIPAQK</sequence>
<comment type="function">
    <text evidence="1">Reversibly catalyzes the transfer of phosphate between ATP and various phosphogens (e.g. creatine phosphate). Creatine kinase isoenzymes play a central role in energy transduction in tissues with large, fluctuating energy demands, such as skeletal muscle, heart, brain and spermatozoa.</text>
</comment>
<comment type="catalytic activity">
    <reaction evidence="1 6">
        <text>creatine + ATP = N-phosphocreatine + ADP + H(+)</text>
        <dbReference type="Rhea" id="RHEA:17157"/>
        <dbReference type="ChEBI" id="CHEBI:15378"/>
        <dbReference type="ChEBI" id="CHEBI:30616"/>
        <dbReference type="ChEBI" id="CHEBI:57947"/>
        <dbReference type="ChEBI" id="CHEBI:58092"/>
        <dbReference type="ChEBI" id="CHEBI:456216"/>
        <dbReference type="EC" id="2.7.3.2"/>
    </reaction>
</comment>
<comment type="subunit">
    <text evidence="3">Dimer of identical or non-identical chains, which can be either B (brain type) or M (muscle type). With MM being the major form in skeletal muscle and myocardium, MB existing in myocardium, and BB existing in many tissues, especially brain.</text>
</comment>
<comment type="subcellular location">
    <subcellularLocation>
        <location>Cytoplasm</location>
    </subcellularLocation>
</comment>
<comment type="similarity">
    <text evidence="4 5">Belongs to the ATP:guanido phosphotransferase family.</text>
</comment>
<name>KCRM_RAT</name>
<organism>
    <name type="scientific">Rattus norvegicus</name>
    <name type="common">Rat</name>
    <dbReference type="NCBI Taxonomy" id="10116"/>
    <lineage>
        <taxon>Eukaryota</taxon>
        <taxon>Metazoa</taxon>
        <taxon>Chordata</taxon>
        <taxon>Craniata</taxon>
        <taxon>Vertebrata</taxon>
        <taxon>Euteleostomi</taxon>
        <taxon>Mammalia</taxon>
        <taxon>Eutheria</taxon>
        <taxon>Euarchontoglires</taxon>
        <taxon>Glires</taxon>
        <taxon>Rodentia</taxon>
        <taxon>Myomorpha</taxon>
        <taxon>Muroidea</taxon>
        <taxon>Muridae</taxon>
        <taxon>Murinae</taxon>
        <taxon>Rattus</taxon>
    </lineage>
</organism>